<reference key="1">
    <citation type="journal article" date="2016" name="Stand. Genomic Sci.">
        <title>Complete genome sequence of Methanospirillum hungatei type strain JF1.</title>
        <authorList>
            <person name="Gunsalus R.P."/>
            <person name="Cook L.E."/>
            <person name="Crable B."/>
            <person name="Rohlin L."/>
            <person name="McDonald E."/>
            <person name="Mouttaki H."/>
            <person name="Sieber J.R."/>
            <person name="Poweleit N."/>
            <person name="Zhou H."/>
            <person name="Lapidus A.L."/>
            <person name="Daligault H.E."/>
            <person name="Land M."/>
            <person name="Gilna P."/>
            <person name="Ivanova N."/>
            <person name="Kyrpides N."/>
            <person name="Culley D.E."/>
            <person name="McInerney M.J."/>
        </authorList>
    </citation>
    <scope>NUCLEOTIDE SEQUENCE [LARGE SCALE GENOMIC DNA]</scope>
    <source>
        <strain>ATCC 27890 / DSM 864 / NBRC 100397 / JF-1</strain>
    </source>
</reference>
<feature type="chain" id="PRO_1000081313" description="Large ribosomal subunit protein eL30">
    <location>
        <begin position="1"/>
        <end position="95"/>
    </location>
</feature>
<accession>Q2FPJ8</accession>
<name>RL30E_METHJ</name>
<dbReference type="EMBL" id="CP000254">
    <property type="protein sequence ID" value="ABD39832.1"/>
    <property type="molecule type" value="Genomic_DNA"/>
</dbReference>
<dbReference type="RefSeq" id="WP_011447129.1">
    <property type="nucleotide sequence ID" value="NC_007796.1"/>
</dbReference>
<dbReference type="SMR" id="Q2FPJ8"/>
<dbReference type="FunCoup" id="Q2FPJ8">
    <property type="interactions" value="150"/>
</dbReference>
<dbReference type="STRING" id="323259.Mhun_0054"/>
<dbReference type="EnsemblBacteria" id="ABD39832">
    <property type="protein sequence ID" value="ABD39832"/>
    <property type="gene ID" value="Mhun_0054"/>
</dbReference>
<dbReference type="GeneID" id="3924868"/>
<dbReference type="KEGG" id="mhu:Mhun_0054"/>
<dbReference type="eggNOG" id="arCOG01752">
    <property type="taxonomic scope" value="Archaea"/>
</dbReference>
<dbReference type="HOGENOM" id="CLU_130502_1_1_2"/>
<dbReference type="InParanoid" id="Q2FPJ8"/>
<dbReference type="OrthoDB" id="10759at2157"/>
<dbReference type="Proteomes" id="UP000001941">
    <property type="component" value="Chromosome"/>
</dbReference>
<dbReference type="GO" id="GO:0022625">
    <property type="term" value="C:cytosolic large ribosomal subunit"/>
    <property type="evidence" value="ECO:0007669"/>
    <property type="project" value="InterPro"/>
</dbReference>
<dbReference type="GO" id="GO:0003723">
    <property type="term" value="F:RNA binding"/>
    <property type="evidence" value="ECO:0007669"/>
    <property type="project" value="InterPro"/>
</dbReference>
<dbReference type="GO" id="GO:0003735">
    <property type="term" value="F:structural constituent of ribosome"/>
    <property type="evidence" value="ECO:0007669"/>
    <property type="project" value="InterPro"/>
</dbReference>
<dbReference type="GO" id="GO:0006412">
    <property type="term" value="P:translation"/>
    <property type="evidence" value="ECO:0007669"/>
    <property type="project" value="UniProtKB-UniRule"/>
</dbReference>
<dbReference type="Gene3D" id="3.30.1330.30">
    <property type="match status" value="1"/>
</dbReference>
<dbReference type="HAMAP" id="MF_00481">
    <property type="entry name" value="Ribosomal_eL30"/>
    <property type="match status" value="1"/>
</dbReference>
<dbReference type="InterPro" id="IPR000231">
    <property type="entry name" value="Ribosomal_eL30"/>
</dbReference>
<dbReference type="InterPro" id="IPR039109">
    <property type="entry name" value="Ribosomal_eL30-like"/>
</dbReference>
<dbReference type="InterPro" id="IPR029064">
    <property type="entry name" value="Ribosomal_eL30-like_sf"/>
</dbReference>
<dbReference type="InterPro" id="IPR004038">
    <property type="entry name" value="Ribosomal_eL8/eL30/eS12/Gad45"/>
</dbReference>
<dbReference type="NCBIfam" id="NF002172">
    <property type="entry name" value="PRK01018.1"/>
    <property type="match status" value="1"/>
</dbReference>
<dbReference type="PANTHER" id="PTHR11449">
    <property type="entry name" value="RIBOSOMAL PROTEIN L30"/>
    <property type="match status" value="1"/>
</dbReference>
<dbReference type="Pfam" id="PF01248">
    <property type="entry name" value="Ribosomal_L7Ae"/>
    <property type="match status" value="1"/>
</dbReference>
<dbReference type="SUPFAM" id="SSF55315">
    <property type="entry name" value="L30e-like"/>
    <property type="match status" value="1"/>
</dbReference>
<organism>
    <name type="scientific">Methanospirillum hungatei JF-1 (strain ATCC 27890 / DSM 864 / NBRC 100397 / JF-1)</name>
    <dbReference type="NCBI Taxonomy" id="323259"/>
    <lineage>
        <taxon>Archaea</taxon>
        <taxon>Methanobacteriati</taxon>
        <taxon>Methanobacteriota</taxon>
        <taxon>Stenosarchaea group</taxon>
        <taxon>Methanomicrobia</taxon>
        <taxon>Methanomicrobiales</taxon>
        <taxon>Methanospirillaceae</taxon>
        <taxon>Methanospirillum</taxon>
    </lineage>
</organism>
<gene>
    <name evidence="1" type="primary">rpl30e</name>
    <name type="ordered locus">Mhun_0054</name>
</gene>
<keyword id="KW-1185">Reference proteome</keyword>
<keyword id="KW-0687">Ribonucleoprotein</keyword>
<keyword id="KW-0689">Ribosomal protein</keyword>
<sequence>MDFNTSLRRAIKTGKVILGQNETKDSIEKGSAKLVVVAANCPAEFSGYLSGKDGVKTYTYEGSGVQLGRACGKPFIVSALAIEESGDSDILTLSR</sequence>
<evidence type="ECO:0000255" key="1">
    <source>
        <dbReference type="HAMAP-Rule" id="MF_00481"/>
    </source>
</evidence>
<evidence type="ECO:0000305" key="2"/>
<protein>
    <recommendedName>
        <fullName evidence="1">Large ribosomal subunit protein eL30</fullName>
    </recommendedName>
    <alternativeName>
        <fullName evidence="2">50S ribosomal protein L30e</fullName>
    </alternativeName>
</protein>
<comment type="similarity">
    <text evidence="1">Belongs to the eukaryotic ribosomal protein eL30 family.</text>
</comment>
<proteinExistence type="inferred from homology"/>